<reference key="1">
    <citation type="journal article" date="2003" name="PLoS Biol.">
        <title>The genome sequence of Caenorhabditis briggsae: a platform for comparative genomics.</title>
        <authorList>
            <person name="Stein L.D."/>
            <person name="Bao Z."/>
            <person name="Blasiar D."/>
            <person name="Blumenthal T."/>
            <person name="Brent M.R."/>
            <person name="Chen N."/>
            <person name="Chinwalla A."/>
            <person name="Clarke L."/>
            <person name="Clee C."/>
            <person name="Coghlan A."/>
            <person name="Coulson A."/>
            <person name="D'Eustachio P."/>
            <person name="Fitch D.H.A."/>
            <person name="Fulton L.A."/>
            <person name="Fulton R.E."/>
            <person name="Griffiths-Jones S."/>
            <person name="Harris T.W."/>
            <person name="Hillier L.W."/>
            <person name="Kamath R."/>
            <person name="Kuwabara P.E."/>
            <person name="Mardis E.R."/>
            <person name="Marra M.A."/>
            <person name="Miner T.L."/>
            <person name="Minx P."/>
            <person name="Mullikin J.C."/>
            <person name="Plumb R.W."/>
            <person name="Rogers J."/>
            <person name="Schein J.E."/>
            <person name="Sohrmann M."/>
            <person name="Spieth J."/>
            <person name="Stajich J.E."/>
            <person name="Wei C."/>
            <person name="Willey D."/>
            <person name="Wilson R.K."/>
            <person name="Durbin R.M."/>
            <person name="Waterston R.H."/>
        </authorList>
    </citation>
    <scope>NUCLEOTIDE SEQUENCE [LARGE SCALE GENOMIC DNA]</scope>
    <source>
        <strain>AF16</strain>
    </source>
</reference>
<accession>Q5WNE3</accession>
<accession>A8X5N2</accession>
<dbReference type="EC" id="3.5.1.52"/>
<dbReference type="EMBL" id="HE600996">
    <property type="protein sequence ID" value="CAP27943.3"/>
    <property type="molecule type" value="Genomic_DNA"/>
</dbReference>
<dbReference type="SMR" id="Q5WNE3"/>
<dbReference type="FunCoup" id="Q5WNE3">
    <property type="interactions" value="2831"/>
</dbReference>
<dbReference type="STRING" id="6238.Q5WNE3"/>
<dbReference type="KEGG" id="cbr:CBG_08042"/>
<dbReference type="CTD" id="8588084"/>
<dbReference type="WormBase" id="CBG08042">
    <property type="protein sequence ID" value="CBP38491"/>
    <property type="gene ID" value="WBGene00029910"/>
    <property type="gene designation" value="Cbr-png-1"/>
</dbReference>
<dbReference type="eggNOG" id="KOG0907">
    <property type="taxonomic scope" value="Eukaryota"/>
</dbReference>
<dbReference type="eggNOG" id="KOG0909">
    <property type="taxonomic scope" value="Eukaryota"/>
</dbReference>
<dbReference type="HOGENOM" id="CLU_030187_2_0_1"/>
<dbReference type="InParanoid" id="Q5WNE3"/>
<dbReference type="OMA" id="ENHYCSQ"/>
<dbReference type="Proteomes" id="UP000008549">
    <property type="component" value="Unassembled WGS sequence"/>
</dbReference>
<dbReference type="GO" id="GO:0005737">
    <property type="term" value="C:cytoplasm"/>
    <property type="evidence" value="ECO:0000250"/>
    <property type="project" value="UniProtKB"/>
</dbReference>
<dbReference type="GO" id="GO:0005829">
    <property type="term" value="C:cytosol"/>
    <property type="evidence" value="ECO:0000318"/>
    <property type="project" value="GO_Central"/>
</dbReference>
<dbReference type="GO" id="GO:0005783">
    <property type="term" value="C:endoplasmic reticulum"/>
    <property type="evidence" value="ECO:0007669"/>
    <property type="project" value="UniProtKB-SubCell"/>
</dbReference>
<dbReference type="GO" id="GO:0005634">
    <property type="term" value="C:nucleus"/>
    <property type="evidence" value="ECO:0000318"/>
    <property type="project" value="GO_Central"/>
</dbReference>
<dbReference type="GO" id="GO:0046872">
    <property type="term" value="F:metal ion binding"/>
    <property type="evidence" value="ECO:0007669"/>
    <property type="project" value="UniProtKB-KW"/>
</dbReference>
<dbReference type="GO" id="GO:0000224">
    <property type="term" value="F:peptide-N4-(N-acetyl-beta-glucosaminyl)asparagine amidase activity"/>
    <property type="evidence" value="ECO:0000318"/>
    <property type="project" value="GO_Central"/>
</dbReference>
<dbReference type="GO" id="GO:0006516">
    <property type="term" value="P:glycoprotein catabolic process"/>
    <property type="evidence" value="ECO:0000250"/>
    <property type="project" value="UniProtKB"/>
</dbReference>
<dbReference type="GO" id="GO:0030513">
    <property type="term" value="P:positive regulation of BMP signaling pathway"/>
    <property type="evidence" value="ECO:0000318"/>
    <property type="project" value="GO_Central"/>
</dbReference>
<dbReference type="CDD" id="cd02947">
    <property type="entry name" value="TRX_family"/>
    <property type="match status" value="1"/>
</dbReference>
<dbReference type="FunFam" id="2.20.25.10:FF:000011">
    <property type="entry name" value="peptide-N(4)-(N-acetyl-beta- glucosaminyl)asparagine amidase"/>
    <property type="match status" value="1"/>
</dbReference>
<dbReference type="FunFam" id="2.60.120.1020:FF:000006">
    <property type="entry name" value="Peptide-N(4)-(N-acetyl-beta-glucosaminyl)asparagine amidase"/>
    <property type="match status" value="1"/>
</dbReference>
<dbReference type="Gene3D" id="2.20.25.10">
    <property type="match status" value="1"/>
</dbReference>
<dbReference type="Gene3D" id="3.10.620.30">
    <property type="match status" value="1"/>
</dbReference>
<dbReference type="Gene3D" id="3.40.30.10">
    <property type="entry name" value="Glutaredoxin"/>
    <property type="match status" value="1"/>
</dbReference>
<dbReference type="Gene3D" id="2.60.120.1020">
    <property type="entry name" value="Peptide N glycanase, PAW domain"/>
    <property type="match status" value="1"/>
</dbReference>
<dbReference type="InterPro" id="IPR008979">
    <property type="entry name" value="Galactose-bd-like_sf"/>
</dbReference>
<dbReference type="InterPro" id="IPR038765">
    <property type="entry name" value="Papain-like_cys_pep_sf"/>
</dbReference>
<dbReference type="InterPro" id="IPR038680">
    <property type="entry name" value="PAW_sf"/>
</dbReference>
<dbReference type="InterPro" id="IPR006588">
    <property type="entry name" value="Peptide_N_glycanase_PAW_dom"/>
</dbReference>
<dbReference type="InterPro" id="IPR050883">
    <property type="entry name" value="PNGase"/>
</dbReference>
<dbReference type="InterPro" id="IPR036249">
    <property type="entry name" value="Thioredoxin-like_sf"/>
</dbReference>
<dbReference type="InterPro" id="IPR017937">
    <property type="entry name" value="Thioredoxin_CS"/>
</dbReference>
<dbReference type="InterPro" id="IPR013766">
    <property type="entry name" value="Thioredoxin_domain"/>
</dbReference>
<dbReference type="InterPro" id="IPR002931">
    <property type="entry name" value="Transglutaminase-like"/>
</dbReference>
<dbReference type="PANTHER" id="PTHR12143">
    <property type="entry name" value="PEPTIDE N-GLYCANASE PNGASE -RELATED"/>
    <property type="match status" value="1"/>
</dbReference>
<dbReference type="PANTHER" id="PTHR12143:SF19">
    <property type="entry name" value="PEPTIDE-N(4)-(N-ACETYL-BETA-GLUCOSAMINYL)ASPARAGINE AMIDASE"/>
    <property type="match status" value="1"/>
</dbReference>
<dbReference type="Pfam" id="PF04721">
    <property type="entry name" value="PAW"/>
    <property type="match status" value="1"/>
</dbReference>
<dbReference type="Pfam" id="PF00085">
    <property type="entry name" value="Thioredoxin"/>
    <property type="match status" value="1"/>
</dbReference>
<dbReference type="Pfam" id="PF01841">
    <property type="entry name" value="Transglut_core"/>
    <property type="match status" value="1"/>
</dbReference>
<dbReference type="PRINTS" id="PR00421">
    <property type="entry name" value="THIOREDOXIN"/>
</dbReference>
<dbReference type="SMART" id="SM00613">
    <property type="entry name" value="PAW"/>
    <property type="match status" value="1"/>
</dbReference>
<dbReference type="SMART" id="SM00460">
    <property type="entry name" value="TGc"/>
    <property type="match status" value="1"/>
</dbReference>
<dbReference type="SUPFAM" id="SSF54001">
    <property type="entry name" value="Cysteine proteinases"/>
    <property type="match status" value="1"/>
</dbReference>
<dbReference type="SUPFAM" id="SSF49785">
    <property type="entry name" value="Galactose-binding domain-like"/>
    <property type="match status" value="1"/>
</dbReference>
<dbReference type="SUPFAM" id="SSF52833">
    <property type="entry name" value="Thioredoxin-like"/>
    <property type="match status" value="1"/>
</dbReference>
<dbReference type="PROSITE" id="PS51398">
    <property type="entry name" value="PAW"/>
    <property type="match status" value="1"/>
</dbReference>
<dbReference type="PROSITE" id="PS00194">
    <property type="entry name" value="THIOREDOXIN_1"/>
    <property type="match status" value="1"/>
</dbReference>
<dbReference type="PROSITE" id="PS51352">
    <property type="entry name" value="THIOREDOXIN_2"/>
    <property type="match status" value="1"/>
</dbReference>
<gene>
    <name type="primary">png-1</name>
    <name type="ORF">CBG08042</name>
</gene>
<keyword id="KW-0963">Cytoplasm</keyword>
<keyword id="KW-0256">Endoplasmic reticulum</keyword>
<keyword id="KW-0378">Hydrolase</keyword>
<keyword id="KW-0479">Metal-binding</keyword>
<keyword id="KW-1185">Reference proteome</keyword>
<keyword id="KW-0862">Zinc</keyword>
<feature type="chain" id="PRO_0000248977" description="Peptide-N(4)-(N-acetyl-beta-glucosaminyl)asparagine amidase">
    <location>
        <begin position="1"/>
        <end position="602"/>
    </location>
</feature>
<feature type="domain" description="Thioredoxin" evidence="2">
    <location>
        <begin position="2"/>
        <end position="130"/>
    </location>
</feature>
<feature type="domain" description="PAW" evidence="3">
    <location>
        <begin position="400"/>
        <end position="602"/>
    </location>
</feature>
<feature type="active site" description="Nucleophile" evidence="1">
    <location>
        <position position="248"/>
    </location>
</feature>
<feature type="active site" evidence="1">
    <location>
        <position position="275"/>
    </location>
</feature>
<feature type="active site" evidence="1">
    <location>
        <position position="292"/>
    </location>
</feature>
<feature type="binding site" evidence="1">
    <location>
        <position position="189"/>
    </location>
    <ligand>
        <name>Zn(2+)</name>
        <dbReference type="ChEBI" id="CHEBI:29105"/>
    </ligand>
</feature>
<feature type="binding site" evidence="1">
    <location>
        <position position="192"/>
    </location>
    <ligand>
        <name>Zn(2+)</name>
        <dbReference type="ChEBI" id="CHEBI:29105"/>
    </ligand>
</feature>
<feature type="binding site" evidence="1">
    <location>
        <position position="222"/>
    </location>
    <ligand>
        <name>Zn(2+)</name>
        <dbReference type="ChEBI" id="CHEBI:29105"/>
    </ligand>
</feature>
<feature type="binding site" evidence="1">
    <location>
        <position position="225"/>
    </location>
    <ligand>
        <name>Zn(2+)</name>
        <dbReference type="ChEBI" id="CHEBI:29105"/>
    </ligand>
</feature>
<proteinExistence type="inferred from homology"/>
<protein>
    <recommendedName>
        <fullName>Peptide-N(4)-(N-acetyl-beta-glucosaminyl)asparagine amidase</fullName>
        <ecNumber>3.5.1.52</ecNumber>
    </recommendedName>
    <alternativeName>
        <fullName>Peptide:N-glycanase</fullName>
        <shortName>PNGase</shortName>
    </alternativeName>
</protein>
<name>NGLY1_CAEBR</name>
<comment type="function">
    <text evidence="1">Specifically deglycosylates the denatured form of N-linked glycoproteins in the cytoplasm and assists their proteasome-mediated degradation. Cleaves the beta-aspartyl-glucosamine (GlcNAc) of the glycan and the amide side chain of Asn, converting Asn to Asp. Prefers proteins containing high-mannose over those bearing complex type oligosaccharides. Can recognize misfolded proteins in the endoplasmic reticulum that are exported to the cytosol to be destroyed and deglycosylate them, while it has no activity toward native proteins. Deglycosylation is a prerequisite for subsequent proteasome-mediated degradation of some, but not all, misfolded glycoproteins. Also displays oxidoreductase (thioredoxin) activity (By similarity).</text>
</comment>
<comment type="catalytic activity">
    <reaction>
        <text>Hydrolysis of an N(4)-(acetyl-beta-D-glucosaminyl)asparagine residue in which the glucosamine residue may be further glycosylated, to yield a (substituted) N-acetyl-beta-D-glucosaminylamine and a peptide containing an aspartate residue.</text>
        <dbReference type="EC" id="3.5.1.52"/>
    </reaction>
</comment>
<comment type="cofactor">
    <cofactor evidence="1">
        <name>Zn(2+)</name>
        <dbReference type="ChEBI" id="CHEBI:29105"/>
    </cofactor>
    <text evidence="1">Binds 1 zinc ion per subunit.</text>
</comment>
<comment type="subcellular location">
    <subcellularLocation>
        <location>Cytoplasm</location>
    </subcellularLocation>
    <subcellularLocation>
        <location evidence="1">Endoplasmic reticulum</location>
    </subcellularLocation>
</comment>
<comment type="similarity">
    <text evidence="3">Belongs to the transglutaminase-like superfamily. PNGase family.</text>
</comment>
<sequence length="602" mass="69212">MPVREVSRLPELNEILEKSDSNRLIIVDFFANWCGPCRMISPAFERLSMEFGNATFLKVNTDLARDIVMRYSISAMPTFLFFKNKQQVDSVRGANESAIISTIRKHYSSTPANPNAASDEEKKFLERFVGYTELRKMHTDEVFKALARSVMPDGISDRLENGEDEKKVLQELLDWFKNDFFTWFDRPTCLKCTLKCTTEGLNGTPTKEEKEGGAGRVEVFICNGCNSEMRFPRYNDPSKLLQTRTGRCGEWANCFGLILSAAGLENRFVLDTTDHVWNEVYLKKEQRWIHVDPCENTMDRPLLYTRGWKKQLKYCIAYGHDHVTDVTWRYVFDSKKLVTQERVRQGVLENFLGKLNARQMAGATEERKRELAVRRVCELMGMMVQEAKNQRIGWEKLGEDMGGRTTGSKEWRRARGELGDNPEAQVLGKPIEFRIQNDANHVEFSYDVNRDSYSQTPEKGFVAQTFECNNIQRKVENDWKMVYLCREDGKKEGNISWHFNLAPLVATDSKKTIEKVEIRMAGIRKFENGNILIIACLGDTCMRIPASGNLTIEDPKPEVLKITVTLSGGERNQAFQHAQLFRTEKDDVAEATESMVVRVYMK</sequence>
<organism>
    <name type="scientific">Caenorhabditis briggsae</name>
    <dbReference type="NCBI Taxonomy" id="6238"/>
    <lineage>
        <taxon>Eukaryota</taxon>
        <taxon>Metazoa</taxon>
        <taxon>Ecdysozoa</taxon>
        <taxon>Nematoda</taxon>
        <taxon>Chromadorea</taxon>
        <taxon>Rhabditida</taxon>
        <taxon>Rhabditina</taxon>
        <taxon>Rhabditomorpha</taxon>
        <taxon>Rhabditoidea</taxon>
        <taxon>Rhabditidae</taxon>
        <taxon>Peloderinae</taxon>
        <taxon>Caenorhabditis</taxon>
    </lineage>
</organism>
<evidence type="ECO:0000250" key="1"/>
<evidence type="ECO:0000255" key="2">
    <source>
        <dbReference type="PROSITE-ProRule" id="PRU00691"/>
    </source>
</evidence>
<evidence type="ECO:0000255" key="3">
    <source>
        <dbReference type="PROSITE-ProRule" id="PRU00731"/>
    </source>
</evidence>